<evidence type="ECO:0000255" key="1">
    <source>
        <dbReference type="HAMAP-Rule" id="MF_00376"/>
    </source>
</evidence>
<evidence type="ECO:0000305" key="2"/>
<comment type="function">
    <text evidence="1">Catalyzes the phosphorylation of the 3'-hydroxyl group of dephosphocoenzyme A to form coenzyme A.</text>
</comment>
<comment type="catalytic activity">
    <reaction evidence="1">
        <text>3'-dephospho-CoA + ATP = ADP + CoA + H(+)</text>
        <dbReference type="Rhea" id="RHEA:18245"/>
        <dbReference type="ChEBI" id="CHEBI:15378"/>
        <dbReference type="ChEBI" id="CHEBI:30616"/>
        <dbReference type="ChEBI" id="CHEBI:57287"/>
        <dbReference type="ChEBI" id="CHEBI:57328"/>
        <dbReference type="ChEBI" id="CHEBI:456216"/>
        <dbReference type="EC" id="2.7.1.24"/>
    </reaction>
</comment>
<comment type="pathway">
    <text evidence="1">Cofactor biosynthesis; coenzyme A biosynthesis; CoA from (R)-pantothenate: step 5/5.</text>
</comment>
<comment type="subcellular location">
    <subcellularLocation>
        <location evidence="1">Cytoplasm</location>
    </subcellularLocation>
</comment>
<comment type="similarity">
    <text evidence="1">Belongs to the CoaE family.</text>
</comment>
<comment type="sequence caution" evidence="2">
    <conflict type="erroneous initiation">
        <sequence resource="EMBL-CDS" id="AAX71511"/>
    </conflict>
</comment>
<proteinExistence type="inferred from homology"/>
<gene>
    <name evidence="1" type="primary">coaE</name>
    <name type="ordered locus">M28_Spy0397</name>
</gene>
<accession>Q48UU5</accession>
<protein>
    <recommendedName>
        <fullName evidence="1">Dephospho-CoA kinase</fullName>
        <ecNumber evidence="1">2.7.1.24</ecNumber>
    </recommendedName>
    <alternativeName>
        <fullName evidence="1">Dephosphocoenzyme A kinase</fullName>
    </alternativeName>
</protein>
<sequence length="197" mass="21941">MIIGITGGIASGKSTVVKVIRKAGYQVIDADQVVHDLQEKGGRLYEALREAFGNQILKADGELDRTKLSEMLFSNPDNMATSSAIQNQIIKEELAAKRDHLAQSQAIFFMDIPILMELGYQDWFDAIWLVYVDAQTQLQRLMARNRLDKGKARQRIASQLPIEEKKPYASLVIDNSGDIAALIKQVQSALLSLANPR</sequence>
<dbReference type="EC" id="2.7.1.24" evidence="1"/>
<dbReference type="EMBL" id="CP000056">
    <property type="protein sequence ID" value="AAX71511.1"/>
    <property type="status" value="ALT_INIT"/>
    <property type="molecule type" value="Genomic_DNA"/>
</dbReference>
<dbReference type="RefSeq" id="WP_021340768.1">
    <property type="nucleotide sequence ID" value="NC_007296.2"/>
</dbReference>
<dbReference type="SMR" id="Q48UU5"/>
<dbReference type="KEGG" id="spb:M28_Spy0397"/>
<dbReference type="HOGENOM" id="CLU_057180_0_0_9"/>
<dbReference type="UniPathway" id="UPA00241">
    <property type="reaction ID" value="UER00356"/>
</dbReference>
<dbReference type="GO" id="GO:0005737">
    <property type="term" value="C:cytoplasm"/>
    <property type="evidence" value="ECO:0007669"/>
    <property type="project" value="UniProtKB-SubCell"/>
</dbReference>
<dbReference type="GO" id="GO:0005524">
    <property type="term" value="F:ATP binding"/>
    <property type="evidence" value="ECO:0007669"/>
    <property type="project" value="UniProtKB-UniRule"/>
</dbReference>
<dbReference type="GO" id="GO:0004140">
    <property type="term" value="F:dephospho-CoA kinase activity"/>
    <property type="evidence" value="ECO:0007669"/>
    <property type="project" value="UniProtKB-UniRule"/>
</dbReference>
<dbReference type="GO" id="GO:0015937">
    <property type="term" value="P:coenzyme A biosynthetic process"/>
    <property type="evidence" value="ECO:0007669"/>
    <property type="project" value="UniProtKB-UniRule"/>
</dbReference>
<dbReference type="CDD" id="cd02022">
    <property type="entry name" value="DPCK"/>
    <property type="match status" value="1"/>
</dbReference>
<dbReference type="FunFam" id="3.40.50.300:FF:000991">
    <property type="entry name" value="Dephospho-CoA kinase"/>
    <property type="match status" value="1"/>
</dbReference>
<dbReference type="Gene3D" id="3.40.50.300">
    <property type="entry name" value="P-loop containing nucleotide triphosphate hydrolases"/>
    <property type="match status" value="1"/>
</dbReference>
<dbReference type="HAMAP" id="MF_00376">
    <property type="entry name" value="Dephospho_CoA_kinase"/>
    <property type="match status" value="1"/>
</dbReference>
<dbReference type="InterPro" id="IPR001977">
    <property type="entry name" value="Depp_CoAkinase"/>
</dbReference>
<dbReference type="InterPro" id="IPR027417">
    <property type="entry name" value="P-loop_NTPase"/>
</dbReference>
<dbReference type="NCBIfam" id="TIGR00152">
    <property type="entry name" value="dephospho-CoA kinase"/>
    <property type="match status" value="1"/>
</dbReference>
<dbReference type="PANTHER" id="PTHR10695:SF46">
    <property type="entry name" value="BIFUNCTIONAL COENZYME A SYNTHASE-RELATED"/>
    <property type="match status" value="1"/>
</dbReference>
<dbReference type="PANTHER" id="PTHR10695">
    <property type="entry name" value="DEPHOSPHO-COA KINASE-RELATED"/>
    <property type="match status" value="1"/>
</dbReference>
<dbReference type="Pfam" id="PF01121">
    <property type="entry name" value="CoaE"/>
    <property type="match status" value="1"/>
</dbReference>
<dbReference type="SUPFAM" id="SSF52540">
    <property type="entry name" value="P-loop containing nucleoside triphosphate hydrolases"/>
    <property type="match status" value="1"/>
</dbReference>
<dbReference type="PROSITE" id="PS51219">
    <property type="entry name" value="DPCK"/>
    <property type="match status" value="1"/>
</dbReference>
<name>COAE_STRPM</name>
<feature type="chain" id="PRO_0000243347" description="Dephospho-CoA kinase">
    <location>
        <begin position="1"/>
        <end position="197"/>
    </location>
</feature>
<feature type="domain" description="DPCK" evidence="1">
    <location>
        <begin position="2"/>
        <end position="197"/>
    </location>
</feature>
<feature type="binding site" evidence="1">
    <location>
        <begin position="10"/>
        <end position="15"/>
    </location>
    <ligand>
        <name>ATP</name>
        <dbReference type="ChEBI" id="CHEBI:30616"/>
    </ligand>
</feature>
<reference key="1">
    <citation type="journal article" date="2005" name="J. Infect. Dis.">
        <title>Genome sequence of a serotype M28 strain of group A Streptococcus: potential new insights into puerperal sepsis and bacterial disease specificity.</title>
        <authorList>
            <person name="Green N.M."/>
            <person name="Zhang S."/>
            <person name="Porcella S.F."/>
            <person name="Nagiec M.J."/>
            <person name="Barbian K.D."/>
            <person name="Beres S.B."/>
            <person name="Lefebvre R.B."/>
            <person name="Musser J.M."/>
        </authorList>
    </citation>
    <scope>NUCLEOTIDE SEQUENCE [LARGE SCALE GENOMIC DNA]</scope>
    <source>
        <strain>MGAS6180</strain>
    </source>
</reference>
<keyword id="KW-0067">ATP-binding</keyword>
<keyword id="KW-0173">Coenzyme A biosynthesis</keyword>
<keyword id="KW-0963">Cytoplasm</keyword>
<keyword id="KW-0418">Kinase</keyword>
<keyword id="KW-0547">Nucleotide-binding</keyword>
<keyword id="KW-0808">Transferase</keyword>
<organism>
    <name type="scientific">Streptococcus pyogenes serotype M28 (strain MGAS6180)</name>
    <dbReference type="NCBI Taxonomy" id="319701"/>
    <lineage>
        <taxon>Bacteria</taxon>
        <taxon>Bacillati</taxon>
        <taxon>Bacillota</taxon>
        <taxon>Bacilli</taxon>
        <taxon>Lactobacillales</taxon>
        <taxon>Streptococcaceae</taxon>
        <taxon>Streptococcus</taxon>
    </lineage>
</organism>